<feature type="chain" id="PRO_1000057972" description="Phosphoglycerate kinase">
    <location>
        <begin position="1"/>
        <end position="394"/>
    </location>
</feature>
<feature type="binding site" evidence="1">
    <location>
        <begin position="21"/>
        <end position="23"/>
    </location>
    <ligand>
        <name>substrate</name>
    </ligand>
</feature>
<feature type="binding site" evidence="1">
    <location>
        <begin position="59"/>
        <end position="62"/>
    </location>
    <ligand>
        <name>substrate</name>
    </ligand>
</feature>
<feature type="binding site" evidence="1">
    <location>
        <position position="117"/>
    </location>
    <ligand>
        <name>substrate</name>
    </ligand>
</feature>
<feature type="binding site" evidence="1">
    <location>
        <position position="150"/>
    </location>
    <ligand>
        <name>substrate</name>
    </ligand>
</feature>
<feature type="binding site" evidence="1">
    <location>
        <position position="201"/>
    </location>
    <ligand>
        <name>ATP</name>
        <dbReference type="ChEBI" id="CHEBI:30616"/>
    </ligand>
</feature>
<feature type="binding site" evidence="1">
    <location>
        <position position="318"/>
    </location>
    <ligand>
        <name>ATP</name>
        <dbReference type="ChEBI" id="CHEBI:30616"/>
    </ligand>
</feature>
<feature type="binding site" evidence="1">
    <location>
        <begin position="344"/>
        <end position="347"/>
    </location>
    <ligand>
        <name>ATP</name>
        <dbReference type="ChEBI" id="CHEBI:30616"/>
    </ligand>
</feature>
<keyword id="KW-0067">ATP-binding</keyword>
<keyword id="KW-0963">Cytoplasm</keyword>
<keyword id="KW-0324">Glycolysis</keyword>
<keyword id="KW-0418">Kinase</keyword>
<keyword id="KW-0547">Nucleotide-binding</keyword>
<keyword id="KW-1185">Reference proteome</keyword>
<keyword id="KW-0808">Transferase</keyword>
<proteinExistence type="inferred from homology"/>
<comment type="catalytic activity">
    <reaction evidence="1">
        <text>(2R)-3-phosphoglycerate + ATP = (2R)-3-phospho-glyceroyl phosphate + ADP</text>
        <dbReference type="Rhea" id="RHEA:14801"/>
        <dbReference type="ChEBI" id="CHEBI:30616"/>
        <dbReference type="ChEBI" id="CHEBI:57604"/>
        <dbReference type="ChEBI" id="CHEBI:58272"/>
        <dbReference type="ChEBI" id="CHEBI:456216"/>
        <dbReference type="EC" id="2.7.2.3"/>
    </reaction>
</comment>
<comment type="pathway">
    <text evidence="1">Carbohydrate degradation; glycolysis; pyruvate from D-glyceraldehyde 3-phosphate: step 2/5.</text>
</comment>
<comment type="subunit">
    <text evidence="1">Monomer.</text>
</comment>
<comment type="subcellular location">
    <subcellularLocation>
        <location evidence="1">Cytoplasm</location>
    </subcellularLocation>
</comment>
<comment type="similarity">
    <text evidence="1">Belongs to the phosphoglycerate kinase family.</text>
</comment>
<organism>
    <name type="scientific">Blochmanniella pennsylvanica (strain BPEN)</name>
    <dbReference type="NCBI Taxonomy" id="291272"/>
    <lineage>
        <taxon>Bacteria</taxon>
        <taxon>Pseudomonadati</taxon>
        <taxon>Pseudomonadota</taxon>
        <taxon>Gammaproteobacteria</taxon>
        <taxon>Enterobacterales</taxon>
        <taxon>Enterobacteriaceae</taxon>
        <taxon>ant endosymbionts</taxon>
        <taxon>Candidatus Blochmanniella</taxon>
    </lineage>
</organism>
<reference key="1">
    <citation type="journal article" date="2005" name="Genome Res.">
        <title>Genome sequence of Blochmannia pennsylvanicus indicates parallel evolutionary trends among bacterial mutualists of insects.</title>
        <authorList>
            <person name="Degnan P.H."/>
            <person name="Lazarus A.B."/>
            <person name="Wernegreen J.J."/>
        </authorList>
    </citation>
    <scope>NUCLEOTIDE SEQUENCE [LARGE SCALE GENOMIC DNA]</scope>
    <source>
        <strain>BPEN</strain>
    </source>
</reference>
<protein>
    <recommendedName>
        <fullName evidence="1">Phosphoglycerate kinase</fullName>
        <ecNumber evidence="1">2.7.2.3</ecNumber>
    </recommendedName>
</protein>
<accession>Q493F0</accession>
<gene>
    <name evidence="1" type="primary">pgk</name>
    <name type="ordered locus">BPEN_261</name>
</gene>
<dbReference type="EC" id="2.7.2.3" evidence="1"/>
<dbReference type="EMBL" id="CP000016">
    <property type="protein sequence ID" value="AAZ40892.1"/>
    <property type="molecule type" value="Genomic_DNA"/>
</dbReference>
<dbReference type="RefSeq" id="WP_011282799.1">
    <property type="nucleotide sequence ID" value="NC_007292.1"/>
</dbReference>
<dbReference type="SMR" id="Q493F0"/>
<dbReference type="STRING" id="291272.BPEN_261"/>
<dbReference type="KEGG" id="bpn:BPEN_261"/>
<dbReference type="eggNOG" id="COG0126">
    <property type="taxonomic scope" value="Bacteria"/>
</dbReference>
<dbReference type="HOGENOM" id="CLU_025427_0_2_6"/>
<dbReference type="OrthoDB" id="9808460at2"/>
<dbReference type="UniPathway" id="UPA00109">
    <property type="reaction ID" value="UER00185"/>
</dbReference>
<dbReference type="Proteomes" id="UP000007794">
    <property type="component" value="Chromosome"/>
</dbReference>
<dbReference type="GO" id="GO:0005829">
    <property type="term" value="C:cytosol"/>
    <property type="evidence" value="ECO:0007669"/>
    <property type="project" value="TreeGrafter"/>
</dbReference>
<dbReference type="GO" id="GO:0043531">
    <property type="term" value="F:ADP binding"/>
    <property type="evidence" value="ECO:0007669"/>
    <property type="project" value="TreeGrafter"/>
</dbReference>
<dbReference type="GO" id="GO:0005524">
    <property type="term" value="F:ATP binding"/>
    <property type="evidence" value="ECO:0007669"/>
    <property type="project" value="UniProtKB-KW"/>
</dbReference>
<dbReference type="GO" id="GO:0004618">
    <property type="term" value="F:phosphoglycerate kinase activity"/>
    <property type="evidence" value="ECO:0007669"/>
    <property type="project" value="UniProtKB-UniRule"/>
</dbReference>
<dbReference type="GO" id="GO:0006094">
    <property type="term" value="P:gluconeogenesis"/>
    <property type="evidence" value="ECO:0007669"/>
    <property type="project" value="TreeGrafter"/>
</dbReference>
<dbReference type="GO" id="GO:0006096">
    <property type="term" value="P:glycolytic process"/>
    <property type="evidence" value="ECO:0007669"/>
    <property type="project" value="UniProtKB-UniRule"/>
</dbReference>
<dbReference type="FunFam" id="3.40.50.1260:FF:000001">
    <property type="entry name" value="Phosphoglycerate kinase"/>
    <property type="match status" value="1"/>
</dbReference>
<dbReference type="FunFam" id="3.40.50.1260:FF:000002">
    <property type="entry name" value="Phosphoglycerate kinase"/>
    <property type="match status" value="1"/>
</dbReference>
<dbReference type="Gene3D" id="3.40.50.1260">
    <property type="entry name" value="Phosphoglycerate kinase, N-terminal domain"/>
    <property type="match status" value="2"/>
</dbReference>
<dbReference type="HAMAP" id="MF_00145">
    <property type="entry name" value="Phosphoglyc_kinase"/>
    <property type="match status" value="1"/>
</dbReference>
<dbReference type="InterPro" id="IPR001576">
    <property type="entry name" value="Phosphoglycerate_kinase"/>
</dbReference>
<dbReference type="InterPro" id="IPR015911">
    <property type="entry name" value="Phosphoglycerate_kinase_CS"/>
</dbReference>
<dbReference type="InterPro" id="IPR015824">
    <property type="entry name" value="Phosphoglycerate_kinase_N"/>
</dbReference>
<dbReference type="InterPro" id="IPR036043">
    <property type="entry name" value="Phosphoglycerate_kinase_sf"/>
</dbReference>
<dbReference type="PANTHER" id="PTHR11406">
    <property type="entry name" value="PHOSPHOGLYCERATE KINASE"/>
    <property type="match status" value="1"/>
</dbReference>
<dbReference type="PANTHER" id="PTHR11406:SF23">
    <property type="entry name" value="PHOSPHOGLYCERATE KINASE 1, CHLOROPLASTIC-RELATED"/>
    <property type="match status" value="1"/>
</dbReference>
<dbReference type="Pfam" id="PF00162">
    <property type="entry name" value="PGK"/>
    <property type="match status" value="1"/>
</dbReference>
<dbReference type="PIRSF" id="PIRSF000724">
    <property type="entry name" value="Pgk"/>
    <property type="match status" value="1"/>
</dbReference>
<dbReference type="PRINTS" id="PR00477">
    <property type="entry name" value="PHGLYCKINASE"/>
</dbReference>
<dbReference type="SUPFAM" id="SSF53748">
    <property type="entry name" value="Phosphoglycerate kinase"/>
    <property type="match status" value="1"/>
</dbReference>
<dbReference type="PROSITE" id="PS00111">
    <property type="entry name" value="PGLYCERATE_KINASE"/>
    <property type="match status" value="1"/>
</dbReference>
<sequence>MTMIKITDLDLTGKRVLIRSDLNVPVKNGVITSNRKIHASLPTIKLALKKSKHVMVTSHLGRPIEGEYNAQFSLQPVVEYLKKQLINRYVKEVRLVKDYLEGVNFMEGELLILENVRFNKGEKKDDEILSKKYAMLCDVFIMDAFGSAHRTQASTHGIGKFVSLACSGLLLQKELEALGKALCNPMRPMVAIVGGSKVSTKLIVLDSLSKVADYLIVGGGIANTFLAAQGKKVGKSLYEEELIPTAKRLLENCDIPILTDVRVSTEFSETAPVTMKAIIDIKDNEQILDLGDESITRILDILNCAKTILWNGPIGVFEFPNFRKGTEMISHAIAKSNAFSIVGGGDTLMAIDLFDISNQISYISTGGGAFLEFIEGKTFPSVKMLEKHALNNMN</sequence>
<name>PGK_BLOPB</name>
<evidence type="ECO:0000255" key="1">
    <source>
        <dbReference type="HAMAP-Rule" id="MF_00145"/>
    </source>
</evidence>